<name>ATPB_DESHY</name>
<comment type="function">
    <text evidence="1">Produces ATP from ADP in the presence of a proton gradient across the membrane. The catalytic sites are hosted primarily by the beta subunits.</text>
</comment>
<comment type="catalytic activity">
    <reaction evidence="1">
        <text>ATP + H2O + 4 H(+)(in) = ADP + phosphate + 5 H(+)(out)</text>
        <dbReference type="Rhea" id="RHEA:57720"/>
        <dbReference type="ChEBI" id="CHEBI:15377"/>
        <dbReference type="ChEBI" id="CHEBI:15378"/>
        <dbReference type="ChEBI" id="CHEBI:30616"/>
        <dbReference type="ChEBI" id="CHEBI:43474"/>
        <dbReference type="ChEBI" id="CHEBI:456216"/>
        <dbReference type="EC" id="7.1.2.2"/>
    </reaction>
</comment>
<comment type="subunit">
    <text evidence="1">F-type ATPases have 2 components, CF(1) - the catalytic core - and CF(0) - the membrane proton channel. CF(1) has five subunits: alpha(3), beta(3), gamma(1), delta(1), epsilon(1). CF(0) has three main subunits: a(1), b(2) and c(9-12). The alpha and beta chains form an alternating ring which encloses part of the gamma chain. CF(1) is attached to CF(0) by a central stalk formed by the gamma and epsilon chains, while a peripheral stalk is formed by the delta and b chains.</text>
</comment>
<comment type="subcellular location">
    <subcellularLocation>
        <location evidence="1">Cell membrane</location>
        <topology evidence="1">Peripheral membrane protein</topology>
    </subcellularLocation>
</comment>
<comment type="similarity">
    <text evidence="1">Belongs to the ATPase alpha/beta chains family.</text>
</comment>
<comment type="sequence caution" evidence="2">
    <conflict type="erroneous initiation">
        <sequence resource="EMBL-CDS" id="BAE86701"/>
    </conflict>
</comment>
<evidence type="ECO:0000255" key="1">
    <source>
        <dbReference type="HAMAP-Rule" id="MF_01347"/>
    </source>
</evidence>
<evidence type="ECO:0000305" key="2"/>
<proteinExistence type="inferred from homology"/>
<protein>
    <recommendedName>
        <fullName evidence="1">ATP synthase subunit beta</fullName>
        <ecNumber evidence="1">7.1.2.2</ecNumber>
    </recommendedName>
    <alternativeName>
        <fullName evidence="1">ATP synthase F1 sector subunit beta</fullName>
    </alternativeName>
    <alternativeName>
        <fullName evidence="1">F-ATPase subunit beta</fullName>
    </alternativeName>
</protein>
<sequence>MNIGKIVQIMGAVVDVEFASEALPEIYSAVKVTVPEQKIDLTLEVAQHLGNNTVRCVAMSSTDGLQRGMAALNTGAPITVPVGPATLGRIFNVLGKAIDNGEEVHTDTSYPIHRPAPAFVDQDPSTVMLETGIKVIDLLAPYSKGGKIGLFGGAGVGKTVLIQELINNIAMEHGGLSVFAGVGERTREGNDLWNEMRESGVIDKMAMVFGQMNEPPGARLRVGLTGLTMAEYFRDVQNQDVLLFIDNIFRFTQAGSEVSALLGRMPSAVGYQPTLATEMGALQERITSTRNGSITSVQAIYVPADDLTDPAPATAFAHLDATTVLNRAISEKGIYPAVDPLDSNSRILSPQIIGEEHYKVARDVQQILQKYKELQDIIAILGMDELSEDEKLVVSRARRIERFLSQPFHVAEVFTGSPGKYVPIKETIRGFKEIVEGKHDNLPEAAFHMVGTIEEAIEKAKALGA</sequence>
<reference key="1">
    <citation type="journal article" date="2006" name="J. Bacteriol.">
        <title>Complete genome sequence of the dehalorespiring bacterium Desulfitobacterium hafniense Y51 and comparison with Dehalococcoides ethenogenes 195.</title>
        <authorList>
            <person name="Nonaka H."/>
            <person name="Keresztes G."/>
            <person name="Shinoda Y."/>
            <person name="Ikenaga Y."/>
            <person name="Abe M."/>
            <person name="Naito K."/>
            <person name="Inatomi K."/>
            <person name="Furukawa K."/>
            <person name="Inui M."/>
            <person name="Yukawa H."/>
        </authorList>
    </citation>
    <scope>NUCLEOTIDE SEQUENCE [LARGE SCALE GENOMIC DNA]</scope>
    <source>
        <strain>Y51</strain>
    </source>
</reference>
<accession>Q24MP1</accession>
<feature type="chain" id="PRO_0000254251" description="ATP synthase subunit beta">
    <location>
        <begin position="1"/>
        <end position="465"/>
    </location>
</feature>
<feature type="binding site" evidence="1">
    <location>
        <begin position="152"/>
        <end position="159"/>
    </location>
    <ligand>
        <name>ATP</name>
        <dbReference type="ChEBI" id="CHEBI:30616"/>
    </ligand>
</feature>
<dbReference type="EC" id="7.1.2.2" evidence="1"/>
<dbReference type="EMBL" id="AP008230">
    <property type="protein sequence ID" value="BAE86701.1"/>
    <property type="status" value="ALT_INIT"/>
    <property type="molecule type" value="Genomic_DNA"/>
</dbReference>
<dbReference type="RefSeq" id="WP_005815475.1">
    <property type="nucleotide sequence ID" value="NC_007907.1"/>
</dbReference>
<dbReference type="SMR" id="Q24MP1"/>
<dbReference type="STRING" id="138119.DSY4912"/>
<dbReference type="KEGG" id="dsy:DSY4912"/>
<dbReference type="eggNOG" id="COG0055">
    <property type="taxonomic scope" value="Bacteria"/>
</dbReference>
<dbReference type="HOGENOM" id="CLU_022398_0_2_9"/>
<dbReference type="Proteomes" id="UP000001946">
    <property type="component" value="Chromosome"/>
</dbReference>
<dbReference type="GO" id="GO:0005886">
    <property type="term" value="C:plasma membrane"/>
    <property type="evidence" value="ECO:0007669"/>
    <property type="project" value="UniProtKB-SubCell"/>
</dbReference>
<dbReference type="GO" id="GO:0045259">
    <property type="term" value="C:proton-transporting ATP synthase complex"/>
    <property type="evidence" value="ECO:0007669"/>
    <property type="project" value="UniProtKB-KW"/>
</dbReference>
<dbReference type="GO" id="GO:0005524">
    <property type="term" value="F:ATP binding"/>
    <property type="evidence" value="ECO:0007669"/>
    <property type="project" value="UniProtKB-UniRule"/>
</dbReference>
<dbReference type="GO" id="GO:0016887">
    <property type="term" value="F:ATP hydrolysis activity"/>
    <property type="evidence" value="ECO:0007669"/>
    <property type="project" value="InterPro"/>
</dbReference>
<dbReference type="GO" id="GO:0046933">
    <property type="term" value="F:proton-transporting ATP synthase activity, rotational mechanism"/>
    <property type="evidence" value="ECO:0007669"/>
    <property type="project" value="UniProtKB-UniRule"/>
</dbReference>
<dbReference type="CDD" id="cd18110">
    <property type="entry name" value="ATP-synt_F1_beta_C"/>
    <property type="match status" value="1"/>
</dbReference>
<dbReference type="CDD" id="cd18115">
    <property type="entry name" value="ATP-synt_F1_beta_N"/>
    <property type="match status" value="1"/>
</dbReference>
<dbReference type="CDD" id="cd01133">
    <property type="entry name" value="F1-ATPase_beta_CD"/>
    <property type="match status" value="1"/>
</dbReference>
<dbReference type="FunFam" id="1.10.1140.10:FF:000001">
    <property type="entry name" value="ATP synthase subunit beta"/>
    <property type="match status" value="1"/>
</dbReference>
<dbReference type="FunFam" id="2.40.10.170:FF:000005">
    <property type="entry name" value="ATP synthase subunit beta"/>
    <property type="match status" value="1"/>
</dbReference>
<dbReference type="FunFam" id="3.40.50.300:FF:000004">
    <property type="entry name" value="ATP synthase subunit beta"/>
    <property type="match status" value="1"/>
</dbReference>
<dbReference type="Gene3D" id="2.40.10.170">
    <property type="match status" value="1"/>
</dbReference>
<dbReference type="Gene3D" id="1.10.1140.10">
    <property type="entry name" value="Bovine Mitochondrial F1-atpase, Atp Synthase Beta Chain, Chain D, domain 3"/>
    <property type="match status" value="1"/>
</dbReference>
<dbReference type="Gene3D" id="3.40.50.300">
    <property type="entry name" value="P-loop containing nucleotide triphosphate hydrolases"/>
    <property type="match status" value="1"/>
</dbReference>
<dbReference type="HAMAP" id="MF_01347">
    <property type="entry name" value="ATP_synth_beta_bact"/>
    <property type="match status" value="1"/>
</dbReference>
<dbReference type="InterPro" id="IPR003593">
    <property type="entry name" value="AAA+_ATPase"/>
</dbReference>
<dbReference type="InterPro" id="IPR055190">
    <property type="entry name" value="ATP-synt_VA_C"/>
</dbReference>
<dbReference type="InterPro" id="IPR005722">
    <property type="entry name" value="ATP_synth_F1_bsu"/>
</dbReference>
<dbReference type="InterPro" id="IPR020003">
    <property type="entry name" value="ATPase_a/bsu_AS"/>
</dbReference>
<dbReference type="InterPro" id="IPR050053">
    <property type="entry name" value="ATPase_alpha/beta_chains"/>
</dbReference>
<dbReference type="InterPro" id="IPR004100">
    <property type="entry name" value="ATPase_F1/V1/A1_a/bsu_N"/>
</dbReference>
<dbReference type="InterPro" id="IPR036121">
    <property type="entry name" value="ATPase_F1/V1/A1_a/bsu_N_sf"/>
</dbReference>
<dbReference type="InterPro" id="IPR000194">
    <property type="entry name" value="ATPase_F1/V1/A1_a/bsu_nucl-bd"/>
</dbReference>
<dbReference type="InterPro" id="IPR024034">
    <property type="entry name" value="ATPase_F1/V1_b/a_C"/>
</dbReference>
<dbReference type="InterPro" id="IPR027417">
    <property type="entry name" value="P-loop_NTPase"/>
</dbReference>
<dbReference type="NCBIfam" id="TIGR01039">
    <property type="entry name" value="atpD"/>
    <property type="match status" value="1"/>
</dbReference>
<dbReference type="PANTHER" id="PTHR15184">
    <property type="entry name" value="ATP SYNTHASE"/>
    <property type="match status" value="1"/>
</dbReference>
<dbReference type="PANTHER" id="PTHR15184:SF71">
    <property type="entry name" value="ATP SYNTHASE SUBUNIT BETA, MITOCHONDRIAL"/>
    <property type="match status" value="1"/>
</dbReference>
<dbReference type="Pfam" id="PF00006">
    <property type="entry name" value="ATP-synt_ab"/>
    <property type="match status" value="1"/>
</dbReference>
<dbReference type="Pfam" id="PF02874">
    <property type="entry name" value="ATP-synt_ab_N"/>
    <property type="match status" value="1"/>
</dbReference>
<dbReference type="Pfam" id="PF22919">
    <property type="entry name" value="ATP-synt_VA_C"/>
    <property type="match status" value="1"/>
</dbReference>
<dbReference type="PIRSF" id="PIRSF039072">
    <property type="entry name" value="ATPase_subunit_beta"/>
    <property type="match status" value="1"/>
</dbReference>
<dbReference type="SMART" id="SM00382">
    <property type="entry name" value="AAA"/>
    <property type="match status" value="1"/>
</dbReference>
<dbReference type="SUPFAM" id="SSF47917">
    <property type="entry name" value="C-terminal domain of alpha and beta subunits of F1 ATP synthase"/>
    <property type="match status" value="1"/>
</dbReference>
<dbReference type="SUPFAM" id="SSF50615">
    <property type="entry name" value="N-terminal domain of alpha and beta subunits of F1 ATP synthase"/>
    <property type="match status" value="1"/>
</dbReference>
<dbReference type="SUPFAM" id="SSF52540">
    <property type="entry name" value="P-loop containing nucleoside triphosphate hydrolases"/>
    <property type="match status" value="1"/>
</dbReference>
<dbReference type="PROSITE" id="PS00152">
    <property type="entry name" value="ATPASE_ALPHA_BETA"/>
    <property type="match status" value="1"/>
</dbReference>
<keyword id="KW-0066">ATP synthesis</keyword>
<keyword id="KW-0067">ATP-binding</keyword>
<keyword id="KW-1003">Cell membrane</keyword>
<keyword id="KW-0139">CF(1)</keyword>
<keyword id="KW-0375">Hydrogen ion transport</keyword>
<keyword id="KW-0406">Ion transport</keyword>
<keyword id="KW-0472">Membrane</keyword>
<keyword id="KW-0547">Nucleotide-binding</keyword>
<keyword id="KW-1185">Reference proteome</keyword>
<keyword id="KW-1278">Translocase</keyword>
<keyword id="KW-0813">Transport</keyword>
<gene>
    <name evidence="1" type="primary">atpD</name>
    <name type="ordered locus">DSY4912</name>
</gene>
<organism>
    <name type="scientific">Desulfitobacterium hafniense (strain Y51)</name>
    <dbReference type="NCBI Taxonomy" id="138119"/>
    <lineage>
        <taxon>Bacteria</taxon>
        <taxon>Bacillati</taxon>
        <taxon>Bacillota</taxon>
        <taxon>Clostridia</taxon>
        <taxon>Eubacteriales</taxon>
        <taxon>Desulfitobacteriaceae</taxon>
        <taxon>Desulfitobacterium</taxon>
    </lineage>
</organism>